<organism>
    <name type="scientific">Salmonella paratyphi B (strain ATCC BAA-1250 / SPB7)</name>
    <dbReference type="NCBI Taxonomy" id="1016998"/>
    <lineage>
        <taxon>Bacteria</taxon>
        <taxon>Pseudomonadati</taxon>
        <taxon>Pseudomonadota</taxon>
        <taxon>Gammaproteobacteria</taxon>
        <taxon>Enterobacterales</taxon>
        <taxon>Enterobacteriaceae</taxon>
        <taxon>Salmonella</taxon>
    </lineage>
</organism>
<gene>
    <name evidence="2" type="primary">dgoD</name>
    <name type="ordered locus">SPAB_04765</name>
</gene>
<accession>A9MWL9</accession>
<protein>
    <recommendedName>
        <fullName evidence="2">D-galactonate dehydratase</fullName>
        <shortName evidence="2">GalD</shortName>
        <ecNumber evidence="2">4.2.1.6</ecNumber>
    </recommendedName>
</protein>
<dbReference type="EC" id="4.2.1.6" evidence="2"/>
<dbReference type="EMBL" id="CP000886">
    <property type="protein sequence ID" value="ABX70076.1"/>
    <property type="molecule type" value="Genomic_DNA"/>
</dbReference>
<dbReference type="RefSeq" id="WP_000704735.1">
    <property type="nucleotide sequence ID" value="NC_010102.1"/>
</dbReference>
<dbReference type="SMR" id="A9MWL9"/>
<dbReference type="KEGG" id="spq:SPAB_04765"/>
<dbReference type="PATRIC" id="fig|1016998.12.peg.4483"/>
<dbReference type="HOGENOM" id="CLU_030273_3_2_6"/>
<dbReference type="BioCyc" id="SENT1016998:SPAB_RS19340-MONOMER"/>
<dbReference type="UniPathway" id="UPA00081">
    <property type="reaction ID" value="UER00518"/>
</dbReference>
<dbReference type="Proteomes" id="UP000008556">
    <property type="component" value="Chromosome"/>
</dbReference>
<dbReference type="GO" id="GO:0008869">
    <property type="term" value="F:galactonate dehydratase activity"/>
    <property type="evidence" value="ECO:0007669"/>
    <property type="project" value="UniProtKB-UniRule"/>
</dbReference>
<dbReference type="GO" id="GO:0000287">
    <property type="term" value="F:magnesium ion binding"/>
    <property type="evidence" value="ECO:0007669"/>
    <property type="project" value="UniProtKB-UniRule"/>
</dbReference>
<dbReference type="GO" id="GO:0009063">
    <property type="term" value="P:amino acid catabolic process"/>
    <property type="evidence" value="ECO:0007669"/>
    <property type="project" value="InterPro"/>
</dbReference>
<dbReference type="GO" id="GO:0034194">
    <property type="term" value="P:D-galactonate catabolic process"/>
    <property type="evidence" value="ECO:0007669"/>
    <property type="project" value="UniProtKB-UniRule"/>
</dbReference>
<dbReference type="CDD" id="cd03325">
    <property type="entry name" value="D-galactonate_dehydratase"/>
    <property type="match status" value="1"/>
</dbReference>
<dbReference type="FunFam" id="3.20.20.120:FF:000008">
    <property type="entry name" value="D-galactonate dehydratase"/>
    <property type="match status" value="1"/>
</dbReference>
<dbReference type="FunFam" id="3.30.390.10:FF:000003">
    <property type="entry name" value="D-galactonate dehydratase"/>
    <property type="match status" value="1"/>
</dbReference>
<dbReference type="Gene3D" id="3.20.20.120">
    <property type="entry name" value="Enolase-like C-terminal domain"/>
    <property type="match status" value="1"/>
</dbReference>
<dbReference type="Gene3D" id="3.30.390.10">
    <property type="entry name" value="Enolase-like, N-terminal domain"/>
    <property type="match status" value="1"/>
</dbReference>
<dbReference type="HAMAP" id="MF_01289">
    <property type="entry name" value="Galacton_dehydrat"/>
    <property type="match status" value="1"/>
</dbReference>
<dbReference type="InterPro" id="IPR034593">
    <property type="entry name" value="DgoD-like"/>
</dbReference>
<dbReference type="InterPro" id="IPR036849">
    <property type="entry name" value="Enolase-like_C_sf"/>
</dbReference>
<dbReference type="InterPro" id="IPR029017">
    <property type="entry name" value="Enolase-like_N"/>
</dbReference>
<dbReference type="InterPro" id="IPR029065">
    <property type="entry name" value="Enolase_C-like"/>
</dbReference>
<dbReference type="InterPro" id="IPR023592">
    <property type="entry name" value="Galactonate_deHydtase"/>
</dbReference>
<dbReference type="InterPro" id="IPR018110">
    <property type="entry name" value="Mandel_Rmase/mucon_lact_enz_CS"/>
</dbReference>
<dbReference type="InterPro" id="IPR013342">
    <property type="entry name" value="Mandelate_racemase_C"/>
</dbReference>
<dbReference type="InterPro" id="IPR013341">
    <property type="entry name" value="Mandelate_racemase_N_dom"/>
</dbReference>
<dbReference type="NCBIfam" id="NF010624">
    <property type="entry name" value="PRK14017.1"/>
    <property type="match status" value="1"/>
</dbReference>
<dbReference type="PANTHER" id="PTHR48080:SF2">
    <property type="entry name" value="D-GALACTONATE DEHYDRATASE"/>
    <property type="match status" value="1"/>
</dbReference>
<dbReference type="PANTHER" id="PTHR48080">
    <property type="entry name" value="D-GALACTONATE DEHYDRATASE-RELATED"/>
    <property type="match status" value="1"/>
</dbReference>
<dbReference type="Pfam" id="PF13378">
    <property type="entry name" value="MR_MLE_C"/>
    <property type="match status" value="1"/>
</dbReference>
<dbReference type="Pfam" id="PF02746">
    <property type="entry name" value="MR_MLE_N"/>
    <property type="match status" value="1"/>
</dbReference>
<dbReference type="SFLD" id="SFLDF00003">
    <property type="entry name" value="D-galactonate_dehydratase"/>
    <property type="match status" value="1"/>
</dbReference>
<dbReference type="SFLD" id="SFLDS00001">
    <property type="entry name" value="Enolase"/>
    <property type="match status" value="1"/>
</dbReference>
<dbReference type="SMART" id="SM00922">
    <property type="entry name" value="MR_MLE"/>
    <property type="match status" value="1"/>
</dbReference>
<dbReference type="SUPFAM" id="SSF51604">
    <property type="entry name" value="Enolase C-terminal domain-like"/>
    <property type="match status" value="1"/>
</dbReference>
<dbReference type="SUPFAM" id="SSF54826">
    <property type="entry name" value="Enolase N-terminal domain-like"/>
    <property type="match status" value="1"/>
</dbReference>
<dbReference type="PROSITE" id="PS00908">
    <property type="entry name" value="MR_MLE_1"/>
    <property type="match status" value="1"/>
</dbReference>
<dbReference type="PROSITE" id="PS00909">
    <property type="entry name" value="MR_MLE_2"/>
    <property type="match status" value="1"/>
</dbReference>
<reference key="1">
    <citation type="submission" date="2007-11" db="EMBL/GenBank/DDBJ databases">
        <authorList>
            <consortium name="The Salmonella enterica serovar Paratyphi B Genome Sequencing Project"/>
            <person name="McClelland M."/>
            <person name="Sanderson E.K."/>
            <person name="Porwollik S."/>
            <person name="Spieth J."/>
            <person name="Clifton W.S."/>
            <person name="Fulton R."/>
            <person name="Cordes M."/>
            <person name="Wollam A."/>
            <person name="Shah N."/>
            <person name="Pepin K."/>
            <person name="Bhonagiri V."/>
            <person name="Nash W."/>
            <person name="Johnson M."/>
            <person name="Thiruvilangam P."/>
            <person name="Wilson R."/>
        </authorList>
    </citation>
    <scope>NUCLEOTIDE SEQUENCE [LARGE SCALE GENOMIC DNA]</scope>
    <source>
        <strain>ATCC BAA-1250 / SPB7</strain>
    </source>
</reference>
<name>DGOD_SALPB</name>
<sequence length="382" mass="42379">MKITHITTYRLPPRWMFLKIETDEGVVGWGEPVIEGRARTVEAAVHEFADYLIGKDPARINDLWQVMYRAGFYRGGPIMMSAIAGIDQALWDIKGKVLNAPVWQLMGGLVRDKIKAYSWVGGDRPADVIDGIEKLRGIGFDTFKLNGCEEMGVIDNSRAVDAAVNTVAQIREAFGSEIEFGLDFHGRVSAPMAKVLIKELEPYRPLFIEEPVLAEQAEYYPRLAAQTHIPIAAGERMFSRFEFKRVLDAGGLAILQPDLSHAGGITECYKIAGMAEAYDVALAPHCPLGPIALAACLHIDFVSRNAVFQEQSMGIHYNKGAELLDFVKNKEDFSMDGGFFKPLTKPGLGVDIDEARVIELSKSAPDWRNPLWRHADGSVAEW</sequence>
<keyword id="KW-0456">Lyase</keyword>
<keyword id="KW-0460">Magnesium</keyword>
<keyword id="KW-0479">Metal-binding</keyword>
<feature type="chain" id="PRO_0000352634" description="D-galactonate dehydratase">
    <location>
        <begin position="1"/>
        <end position="382"/>
    </location>
</feature>
<feature type="active site" description="Proton donor" evidence="1">
    <location>
        <position position="185"/>
    </location>
</feature>
<feature type="active site" description="Proton acceptor" evidence="1">
    <location>
        <position position="285"/>
    </location>
</feature>
<feature type="binding site" evidence="2">
    <location>
        <position position="183"/>
    </location>
    <ligand>
        <name>Mg(2+)</name>
        <dbReference type="ChEBI" id="CHEBI:18420"/>
    </ligand>
</feature>
<feature type="binding site" evidence="2">
    <location>
        <position position="209"/>
    </location>
    <ligand>
        <name>Mg(2+)</name>
        <dbReference type="ChEBI" id="CHEBI:18420"/>
    </ligand>
</feature>
<feature type="binding site" evidence="2">
    <location>
        <position position="235"/>
    </location>
    <ligand>
        <name>Mg(2+)</name>
        <dbReference type="ChEBI" id="CHEBI:18420"/>
    </ligand>
</feature>
<feature type="site" description="Increases basicity of active site His" evidence="2">
    <location>
        <position position="258"/>
    </location>
</feature>
<feature type="site" description="Transition state stabilizer" evidence="2">
    <location>
        <position position="310"/>
    </location>
</feature>
<evidence type="ECO:0000250" key="1"/>
<evidence type="ECO:0000255" key="2">
    <source>
        <dbReference type="HAMAP-Rule" id="MF_01289"/>
    </source>
</evidence>
<proteinExistence type="inferred from homology"/>
<comment type="function">
    <text evidence="2">Catalyzes the dehydration of D-galactonate to 2-keto-3-deoxy-D-galactonate.</text>
</comment>
<comment type="catalytic activity">
    <reaction evidence="2">
        <text>D-galactonate = 2-dehydro-3-deoxy-D-galactonate + H2O</text>
        <dbReference type="Rhea" id="RHEA:18649"/>
        <dbReference type="ChEBI" id="CHEBI:12931"/>
        <dbReference type="ChEBI" id="CHEBI:15377"/>
        <dbReference type="ChEBI" id="CHEBI:57989"/>
        <dbReference type="EC" id="4.2.1.6"/>
    </reaction>
</comment>
<comment type="cofactor">
    <cofactor evidence="2">
        <name>Mg(2+)</name>
        <dbReference type="ChEBI" id="CHEBI:18420"/>
    </cofactor>
    <text evidence="2">Binds 1 Mg(2+) ion per subunit.</text>
</comment>
<comment type="pathway">
    <text evidence="2">Carbohydrate acid metabolism; D-galactonate degradation; D-glyceraldehyde 3-phosphate and pyruvate from D-galactonate: step 1/3.</text>
</comment>
<comment type="miscellaneous">
    <text evidence="2">Reaction proceeds via an anti dehydration.</text>
</comment>
<comment type="similarity">
    <text evidence="2">Belongs to the mandelate racemase/muconate lactonizing enzyme family. GalD subfamily.</text>
</comment>